<proteinExistence type="evidence at protein level"/>
<organism>
    <name type="scientific">Bombyx mori</name>
    <name type="common">Silk moth</name>
    <dbReference type="NCBI Taxonomy" id="7091"/>
    <lineage>
        <taxon>Eukaryota</taxon>
        <taxon>Metazoa</taxon>
        <taxon>Ecdysozoa</taxon>
        <taxon>Arthropoda</taxon>
        <taxon>Hexapoda</taxon>
        <taxon>Insecta</taxon>
        <taxon>Pterygota</taxon>
        <taxon>Neoptera</taxon>
        <taxon>Endopterygota</taxon>
        <taxon>Lepidoptera</taxon>
        <taxon>Glossata</taxon>
        <taxon>Ditrysia</taxon>
        <taxon>Bombycoidea</taxon>
        <taxon>Bombycidae</taxon>
        <taxon>Bombycinae</taxon>
        <taxon>Bombyx</taxon>
    </lineage>
</organism>
<reference evidence="8" key="1">
    <citation type="submission" date="2006-03" db="EMBL/GenBank/DDBJ databases">
        <title>Blast silkworm EST database for functional genes.</title>
        <authorList>
            <person name="Niu B.L."/>
            <person name="Meng Z.Q."/>
            <person name="Weng H.B."/>
            <person name="Shen W.F."/>
            <person name="He L.H."/>
            <person name="Zheng K.F."/>
            <person name="Ye S.T."/>
            <person name="Lin T.B."/>
            <person name="Chen J.E."/>
        </authorList>
    </citation>
    <scope>NUCLEOTIDE SEQUENCE [MRNA] (ISOFORMS 1 AND 2)</scope>
</reference>
<reference evidence="7" key="2">
    <citation type="journal article" date="2001" name="Yi Chuan Xue Bao">
        <title>Protein database for several tissues derived from five instar of silkworm.</title>
        <authorList>
            <person name="Zhong B.-X."/>
        </authorList>
    </citation>
    <scope>PROTEIN SEQUENCE OF 15-46</scope>
    <source>
        <strain evidence="4">Xinhang X Keming</strain>
        <tissue evidence="4">Body wall</tissue>
        <tissue evidence="4">Fat body</tissue>
    </source>
</reference>
<keyword id="KW-0025">Alternative splicing</keyword>
<keyword id="KW-0175">Coiled coil</keyword>
<keyword id="KW-0903">Direct protein sequencing</keyword>
<keyword id="KW-1185">Reference proteome</keyword>
<keyword id="KW-0677">Repeat</keyword>
<comment type="function">
    <text evidence="7">Tropomyosin, in association with the troponin complex, plays a central role in the calcium dependent regulation of muscle contraction.</text>
</comment>
<comment type="subunit">
    <text evidence="1">Homodimer.</text>
</comment>
<comment type="alternative products">
    <event type="alternative splicing"/>
    <isoform>
        <id>Q1HPU0-1</id>
        <name evidence="5">1</name>
        <sequence type="displayed"/>
    </isoform>
    <isoform>
        <id>Q1HPU0-2</id>
        <name evidence="5">2</name>
        <name evidence="5">5</name>
        <sequence type="described" ref="VSP_052285"/>
    </isoform>
</comment>
<comment type="domain">
    <text evidence="7">The molecule is in a coiled coil structure that is formed by 2 polypeptide chains. The sequence exhibits a prominent seven-residues periodicity.</text>
</comment>
<comment type="similarity">
    <text evidence="2">Belongs to the tropomyosin family.</text>
</comment>
<evidence type="ECO:0000250" key="1">
    <source>
        <dbReference type="UniProtKB" id="P15846"/>
    </source>
</evidence>
<evidence type="ECO:0000255" key="2"/>
<evidence type="ECO:0000256" key="3">
    <source>
        <dbReference type="SAM" id="MobiDB-lite"/>
    </source>
</evidence>
<evidence type="ECO:0000269" key="4">
    <source>
    </source>
</evidence>
<evidence type="ECO:0000269" key="5">
    <source ref="1"/>
</evidence>
<evidence type="ECO:0000303" key="6">
    <source ref="1"/>
</evidence>
<evidence type="ECO:0000305" key="7"/>
<evidence type="ECO:0000312" key="8">
    <source>
        <dbReference type="EMBL" id="ABF51401.1"/>
    </source>
</evidence>
<protein>
    <recommendedName>
        <fullName>Tropomyosin-1</fullName>
    </recommendedName>
</protein>
<dbReference type="EMBL" id="DQ443312">
    <property type="protein sequence ID" value="ABF51401.1"/>
    <property type="molecule type" value="mRNA"/>
</dbReference>
<dbReference type="EMBL" id="DQ443356">
    <property type="protein sequence ID" value="ABF51445.1"/>
    <property type="molecule type" value="mRNA"/>
</dbReference>
<dbReference type="RefSeq" id="NP_001040445.1">
    <molecule id="Q1HPU0-1"/>
    <property type="nucleotide sequence ID" value="NM_001046980.1"/>
</dbReference>
<dbReference type="SMR" id="Q1HPU0"/>
<dbReference type="FunCoup" id="Q1HPU0">
    <property type="interactions" value="11"/>
</dbReference>
<dbReference type="STRING" id="7091.Q1HPU0"/>
<dbReference type="Allergome" id="4112">
    <property type="allergen name" value="Bomb m 7"/>
</dbReference>
<dbReference type="Allergome" id="4114">
    <property type="allergen name" value="Bomb m 7.0102"/>
</dbReference>
<dbReference type="PaxDb" id="7091-BGIBMGA001587-TA"/>
<dbReference type="EnsemblMetazoa" id="NM_001046980.1">
    <molecule id="Q1HPU0-1"/>
    <property type="protein sequence ID" value="NP_001040445.1"/>
    <property type="gene ID" value="LOC732984"/>
</dbReference>
<dbReference type="GeneID" id="732984"/>
<dbReference type="KEGG" id="bmor:732984"/>
<dbReference type="eggNOG" id="KOG1003">
    <property type="taxonomic scope" value="Eukaryota"/>
</dbReference>
<dbReference type="HOGENOM" id="CLU_055027_0_2_1"/>
<dbReference type="InParanoid" id="Q1HPU0"/>
<dbReference type="OMA" id="HHARESE"/>
<dbReference type="OrthoDB" id="523593at7088"/>
<dbReference type="Proteomes" id="UP000005204">
    <property type="component" value="Unassembled WGS sequence"/>
</dbReference>
<dbReference type="FunFam" id="1.20.5.170:FF:000005">
    <property type="entry name" value="Tropomyosin alpha-1 chain"/>
    <property type="match status" value="1"/>
</dbReference>
<dbReference type="FunFam" id="1.20.5.170:FF:000001">
    <property type="entry name" value="Tropomyosin alpha-1 chain isoform 1"/>
    <property type="match status" value="1"/>
</dbReference>
<dbReference type="FunFam" id="1.20.5.340:FF:000001">
    <property type="entry name" value="Tropomyosin alpha-1 chain isoform 2"/>
    <property type="match status" value="1"/>
</dbReference>
<dbReference type="Gene3D" id="1.20.5.170">
    <property type="match status" value="2"/>
</dbReference>
<dbReference type="Gene3D" id="1.20.5.340">
    <property type="match status" value="1"/>
</dbReference>
<dbReference type="InterPro" id="IPR000533">
    <property type="entry name" value="Tropomyosin"/>
</dbReference>
<dbReference type="PANTHER" id="PTHR19269">
    <property type="entry name" value="TROPOMYOSIN"/>
    <property type="match status" value="1"/>
</dbReference>
<dbReference type="Pfam" id="PF00261">
    <property type="entry name" value="Tropomyosin"/>
    <property type="match status" value="1"/>
</dbReference>
<dbReference type="PRINTS" id="PR00194">
    <property type="entry name" value="TROPOMYOSIN"/>
</dbReference>
<dbReference type="SUPFAM" id="SSF57997">
    <property type="entry name" value="Tropomyosin"/>
    <property type="match status" value="1"/>
</dbReference>
<dbReference type="PROSITE" id="PS00326">
    <property type="entry name" value="TROPOMYOSIN"/>
    <property type="match status" value="1"/>
</dbReference>
<accession>Q1HPU0</accession>
<accession>P82200</accession>
<accession>Q1HPP6</accession>
<sequence>MDAIKKKMQAMKLEKDNAMDKADTCEQQARDANLRAEKVNEEVRELQKKLAQVEEDLILNKNKLEQANKDLEEKEKQLTATEAEVAALNRKVQQIEEDLEKSEERSGTAQQKLLEAQQSADENNRMCKVLENRAQQDEERMDQLTNQLKEARLLAEDADGKSDEVSRKLAFVEDELEVAEDRVKSGDAKISELEEELKVVGNSLKSLEVSEEKANQRVEEFKKQLKTLTGKLKEAEARAEYAEKTVKKLQKEVDRLEDELGINKDRYKSLADEMDSTFAELAGY</sequence>
<name>TPM1_BOMMO</name>
<feature type="chain" id="PRO_0000274257" description="Tropomyosin-1">
    <location>
        <begin position="1"/>
        <end position="284"/>
    </location>
</feature>
<feature type="region of interest" description="Disordered" evidence="3">
    <location>
        <begin position="1"/>
        <end position="26"/>
    </location>
</feature>
<feature type="region of interest" description="Disordered" evidence="3">
    <location>
        <begin position="96"/>
        <end position="124"/>
    </location>
</feature>
<feature type="coiled-coil region" evidence="2">
    <location>
        <begin position="1"/>
        <end position="276"/>
    </location>
</feature>
<feature type="compositionally biased region" description="Basic and acidic residues" evidence="3">
    <location>
        <begin position="12"/>
        <end position="26"/>
    </location>
</feature>
<feature type="compositionally biased region" description="Polar residues" evidence="3">
    <location>
        <begin position="107"/>
        <end position="121"/>
    </location>
</feature>
<feature type="splice variant" id="VSP_052285" description="In isoform 2." evidence="6">
    <original>DELGINKDRYKSLADEMDSTFAELAGY</original>
    <variation>GNTNVYKTETNLSF</variation>
    <location>
        <begin position="258"/>
        <end position="284"/>
    </location>
</feature>